<evidence type="ECO:0000255" key="1">
    <source>
        <dbReference type="HAMAP-Rule" id="MF_00295"/>
    </source>
</evidence>
<evidence type="ECO:0000269" key="2">
    <source>
    </source>
</evidence>
<evidence type="ECO:0000303" key="3">
    <source>
    </source>
</evidence>
<keyword id="KW-0012">Acyltransferase</keyword>
<keyword id="KW-0028">Amino-acid biosynthesis</keyword>
<keyword id="KW-0963">Cytoplasm</keyword>
<keyword id="KW-0486">Methionine biosynthesis</keyword>
<keyword id="KW-0808">Transferase</keyword>
<organism>
    <name type="scientific">Alteromonas mediterranea (strain DSM 17117 / CIP 110805 / LMG 28347 / Deep ecotype)</name>
    <dbReference type="NCBI Taxonomy" id="1774373"/>
    <lineage>
        <taxon>Bacteria</taxon>
        <taxon>Pseudomonadati</taxon>
        <taxon>Pseudomonadota</taxon>
        <taxon>Gammaproteobacteria</taxon>
        <taxon>Alteromonadales</taxon>
        <taxon>Alteromonadaceae</taxon>
        <taxon>Alteromonas/Salinimonas group</taxon>
        <taxon>Alteromonas</taxon>
    </lineage>
</organism>
<proteinExistence type="evidence at protein level"/>
<dbReference type="EC" id="2.3.1.46" evidence="1 2"/>
<dbReference type="EMBL" id="CP001103">
    <property type="protein sequence ID" value="AEA97348.1"/>
    <property type="molecule type" value="Genomic_DNA"/>
</dbReference>
<dbReference type="SMR" id="B4RUL1"/>
<dbReference type="KEGG" id="amc:MADE_1006030"/>
<dbReference type="HOGENOM" id="CLU_057851_0_1_6"/>
<dbReference type="UniPathway" id="UPA00051">
    <property type="reaction ID" value="UER00075"/>
</dbReference>
<dbReference type="Proteomes" id="UP000001870">
    <property type="component" value="Chromosome"/>
</dbReference>
<dbReference type="GO" id="GO:0005737">
    <property type="term" value="C:cytoplasm"/>
    <property type="evidence" value="ECO:0007669"/>
    <property type="project" value="UniProtKB-SubCell"/>
</dbReference>
<dbReference type="GO" id="GO:0004414">
    <property type="term" value="F:homoserine O-acetyltransferase activity"/>
    <property type="evidence" value="ECO:0007669"/>
    <property type="project" value="UniProtKB-UniRule"/>
</dbReference>
<dbReference type="GO" id="GO:0008899">
    <property type="term" value="F:homoserine O-succinyltransferase activity"/>
    <property type="evidence" value="ECO:0007669"/>
    <property type="project" value="UniProtKB-EC"/>
</dbReference>
<dbReference type="GO" id="GO:0019281">
    <property type="term" value="P:L-methionine biosynthetic process from homoserine via O-succinyl-L-homoserine and cystathionine"/>
    <property type="evidence" value="ECO:0007669"/>
    <property type="project" value="InterPro"/>
</dbReference>
<dbReference type="CDD" id="cd03131">
    <property type="entry name" value="GATase1_HTS"/>
    <property type="match status" value="1"/>
</dbReference>
<dbReference type="FunFam" id="3.40.50.880:FF:000004">
    <property type="entry name" value="Homoserine O-succinyltransferase"/>
    <property type="match status" value="1"/>
</dbReference>
<dbReference type="Gene3D" id="3.40.50.880">
    <property type="match status" value="1"/>
</dbReference>
<dbReference type="HAMAP" id="MF_00295">
    <property type="entry name" value="MetA_acyltransf"/>
    <property type="match status" value="1"/>
</dbReference>
<dbReference type="InterPro" id="IPR029062">
    <property type="entry name" value="Class_I_gatase-like"/>
</dbReference>
<dbReference type="InterPro" id="IPR005697">
    <property type="entry name" value="HST_MetA"/>
</dbReference>
<dbReference type="InterPro" id="IPR033752">
    <property type="entry name" value="MetA_family"/>
</dbReference>
<dbReference type="NCBIfam" id="TIGR01001">
    <property type="entry name" value="metA"/>
    <property type="match status" value="1"/>
</dbReference>
<dbReference type="PANTHER" id="PTHR20919">
    <property type="entry name" value="HOMOSERINE O-SUCCINYLTRANSFERASE"/>
    <property type="match status" value="1"/>
</dbReference>
<dbReference type="PANTHER" id="PTHR20919:SF0">
    <property type="entry name" value="HOMOSERINE O-SUCCINYLTRANSFERASE"/>
    <property type="match status" value="1"/>
</dbReference>
<dbReference type="Pfam" id="PF04204">
    <property type="entry name" value="HTS"/>
    <property type="match status" value="1"/>
</dbReference>
<dbReference type="PIRSF" id="PIRSF000450">
    <property type="entry name" value="H_ser_succinyltr"/>
    <property type="match status" value="1"/>
</dbReference>
<dbReference type="SUPFAM" id="SSF52317">
    <property type="entry name" value="Class I glutamine amidotransferase-like"/>
    <property type="match status" value="1"/>
</dbReference>
<name>METAS_ALTMD</name>
<protein>
    <recommendedName>
        <fullName evidence="1">Homoserine O-succinyltransferase</fullName>
        <shortName evidence="1 3">HST</shortName>
        <ecNumber evidence="1 2">2.3.1.46</ecNumber>
    </recommendedName>
    <alternativeName>
        <fullName evidence="1">Homoserine transsuccinylase</fullName>
        <shortName evidence="1">HTS</shortName>
    </alternativeName>
</protein>
<gene>
    <name evidence="1 3" type="primary">metAS</name>
    <name type="ordered locus">MADE_1006030</name>
</gene>
<feature type="chain" id="PRO_1000115172" description="Homoserine O-succinyltransferase">
    <location>
        <begin position="1"/>
        <end position="312"/>
    </location>
</feature>
<feature type="active site" description="Acyl-thioester intermediate" evidence="1">
    <location>
        <position position="142"/>
    </location>
</feature>
<feature type="active site" description="Proton acceptor" evidence="1">
    <location>
        <position position="235"/>
    </location>
</feature>
<feature type="active site" evidence="1">
    <location>
        <position position="237"/>
    </location>
</feature>
<feature type="binding site" evidence="1">
    <location>
        <position position="163"/>
    </location>
    <ligand>
        <name>substrate</name>
    </ligand>
</feature>
<feature type="binding site" evidence="1">
    <location>
        <position position="192"/>
    </location>
    <ligand>
        <name>substrate</name>
    </ligand>
</feature>
<feature type="binding site" evidence="1">
    <location>
        <position position="249"/>
    </location>
    <ligand>
        <name>substrate</name>
    </ligand>
</feature>
<feature type="site" description="Important for acyl-CoA specificity" evidence="1">
    <location>
        <position position="111"/>
    </location>
</feature>
<feature type="site" description="Important for substrate specificity" evidence="1">
    <location>
        <position position="192"/>
    </location>
</feature>
<reference key="1">
    <citation type="journal article" date="2008" name="ISME J.">
        <title>Comparative genomics of two ecotypes of the marine planktonic copiotroph Alteromonas macleodii suggests alternative lifestyles associated with different kinds of particulate organic matter.</title>
        <authorList>
            <person name="Ivars-Martinez E."/>
            <person name="Martin-Cuadrado A.-B."/>
            <person name="D'Auria G."/>
            <person name="Mira A."/>
            <person name="Ferriera S."/>
            <person name="Johnson J."/>
            <person name="Friedman R."/>
            <person name="Rodriguez-Valera F."/>
        </authorList>
    </citation>
    <scope>NUCLEOTIDE SEQUENCE [LARGE SCALE GENOMIC DNA]</scope>
    <source>
        <strain>DSM 17117 / CIP 110805 / LMG 28347 / Deep ecotype</strain>
    </source>
</reference>
<reference key="2">
    <citation type="journal article" date="2017" name="Nat. Chem. Biol.">
        <title>Parallel evolution of non-homologous isofunctional enzymes in methionine biosynthesis.</title>
        <authorList>
            <person name="Bastard K."/>
            <person name="Perret A."/>
            <person name="Mariage A."/>
            <person name="Bessonnet T."/>
            <person name="Pinet-Turpault A."/>
            <person name="Petit J.L."/>
            <person name="Darii E."/>
            <person name="Bazire P."/>
            <person name="Vergne-Vaxelaire C."/>
            <person name="Brewee C."/>
            <person name="Debard A."/>
            <person name="Pellouin V."/>
            <person name="Besnard-Gonnet M."/>
            <person name="Artiguenave F."/>
            <person name="Medigue C."/>
            <person name="Vallenet D."/>
            <person name="Danchin A."/>
            <person name="Zaparucha A."/>
            <person name="Weissenbach J."/>
            <person name="Salanoubat M."/>
            <person name="de Berardinis V."/>
        </authorList>
    </citation>
    <scope>FUNCTION</scope>
    <scope>CATALYTIC ACTIVITY</scope>
</reference>
<comment type="function">
    <text evidence="1 2">Transfers a succinyl group from succinyl-CoA to L-homoserine, forming succinyl-L-homoserine.</text>
</comment>
<comment type="catalytic activity">
    <reaction evidence="1 2">
        <text>L-homoserine + succinyl-CoA = O-succinyl-L-homoserine + CoA</text>
        <dbReference type="Rhea" id="RHEA:22008"/>
        <dbReference type="ChEBI" id="CHEBI:57287"/>
        <dbReference type="ChEBI" id="CHEBI:57292"/>
        <dbReference type="ChEBI" id="CHEBI:57476"/>
        <dbReference type="ChEBI" id="CHEBI:57661"/>
        <dbReference type="EC" id="2.3.1.46"/>
    </reaction>
</comment>
<comment type="pathway">
    <text evidence="1">Amino-acid biosynthesis; L-methionine biosynthesis via de novo pathway; O-succinyl-L-homoserine from L-homoserine: step 1/1.</text>
</comment>
<comment type="subcellular location">
    <subcellularLocation>
        <location evidence="1">Cytoplasm</location>
    </subcellularLocation>
</comment>
<comment type="similarity">
    <text evidence="1">Belongs to the MetA family.</text>
</comment>
<sequence length="312" mass="35790">MPIRIPEQLPAQNVLLGENIFTMDMDRAANQDIRPLEVGILNLMPNKIETEVQLLRLLSNTPLQINVDLIRIDNQAPKNTPQSHMDAFYHDFSSVVNKKYDGLIVTGAPLALIDYEEVKYWETMTTILEWAQRHVNSTLYLCWAAHAAMYHFYGITRELRDEKFSGVFKHKVNDPNNELLRGFDPSFYAPHSRYGHIDTSLYNSVDGLNVVAESDEVGAYIVASEDKRMVFVTGHPEYDPDTLKDEYLRDIAAGQTPPIPKNYFEGDDPATSPIVQWRSHGSLLFTNWLNYYVYQTTPYDLSQLAEKSQPKR</sequence>
<accession>B4RUL1</accession>
<accession>F2G406</accession>